<keyword id="KW-0342">GTP-binding</keyword>
<keyword id="KW-1035">Host cytoplasm</keyword>
<keyword id="KW-1048">Host nucleus</keyword>
<keyword id="KW-0378">Hydrolase</keyword>
<keyword id="KW-0506">mRNA capping</keyword>
<keyword id="KW-0507">mRNA processing</keyword>
<keyword id="KW-0547">Nucleotide-binding</keyword>
<keyword id="KW-0548">Nucleotidyltransferase</keyword>
<keyword id="KW-1185">Reference proteome</keyword>
<keyword id="KW-0808">Transferase</keyword>
<organism>
    <name type="scientific">Autographa californica nuclear polyhedrosis virus</name>
    <name type="common">AcMNPV</name>
    <dbReference type="NCBI Taxonomy" id="46015"/>
    <lineage>
        <taxon>Viruses</taxon>
        <taxon>Viruses incertae sedis</taxon>
        <taxon>Naldaviricetes</taxon>
        <taxon>Lefavirales</taxon>
        <taxon>Baculoviridae</taxon>
        <taxon>Alphabaculovirus</taxon>
        <taxon>Alphabaculovirus aucalifornicae</taxon>
    </lineage>
</organism>
<comment type="function">
    <text evidence="1 3 4 5">Component of the viral DNA-dependent RNA polymerase that catalyzes two reactions involved in viral RNA cap formation: an RNA 5'-triphosphatase that hydrolyzes the gamma phosphate of triphosphate-terminated RNA and a guanylyltransferase that reacts with GTP to form a covalent protein-guanylate adduct. Therefore plays an essential role in late and very late gene expression.</text>
</comment>
<comment type="catalytic activity">
    <reaction>
        <text>a 5'-end diphospho-ribonucleoside in mRNA + GTP + H(+) = a 5'-end (5'-triphosphoguanosine)-ribonucleoside in mRNA + diphosphate</text>
        <dbReference type="Rhea" id="RHEA:67012"/>
        <dbReference type="Rhea" id="RHEA-COMP:17165"/>
        <dbReference type="Rhea" id="RHEA-COMP:17166"/>
        <dbReference type="ChEBI" id="CHEBI:15378"/>
        <dbReference type="ChEBI" id="CHEBI:33019"/>
        <dbReference type="ChEBI" id="CHEBI:37565"/>
        <dbReference type="ChEBI" id="CHEBI:167616"/>
        <dbReference type="ChEBI" id="CHEBI:167617"/>
        <dbReference type="EC" id="2.7.7.50"/>
    </reaction>
</comment>
<comment type="catalytic activity">
    <reaction evidence="6">
        <text>a 5'-end triphospho-ribonucleoside in mRNA + H2O = a 5'-end diphospho-ribonucleoside in mRNA + phosphate + H(+)</text>
        <dbReference type="Rhea" id="RHEA:67004"/>
        <dbReference type="Rhea" id="RHEA-COMP:17164"/>
        <dbReference type="Rhea" id="RHEA-COMP:17165"/>
        <dbReference type="ChEBI" id="CHEBI:15377"/>
        <dbReference type="ChEBI" id="CHEBI:15378"/>
        <dbReference type="ChEBI" id="CHEBI:43474"/>
        <dbReference type="ChEBI" id="CHEBI:167616"/>
        <dbReference type="ChEBI" id="CHEBI:167618"/>
        <dbReference type="EC" id="3.6.1.74"/>
    </reaction>
</comment>
<comment type="subunit">
    <text evidence="3">Interacts with LEF-8, LEF-9, and p47.</text>
</comment>
<comment type="subcellular location">
    <subcellularLocation>
        <location evidence="2">Host cytoplasm</location>
    </subcellularLocation>
    <subcellularLocation>
        <location evidence="2">Host nucleus</location>
    </subcellularLocation>
    <text evidence="2">Preferentially in the host nucleus and associated with the virogenic stroma.</text>
</comment>
<comment type="miscellaneous">
    <text evidence="6">Tpase and GTAse regions, and GTase active site inferred by structural homology with vaccinia virus TPase/GTase family.</text>
</comment>
<comment type="similarity">
    <text evidence="6">Belongs to the baculoviridae LEF-4 family.</text>
</comment>
<sequence length="464" mass="53910">MDYGDFVIEKEISYSINFSQDLLYKILNSYIVPNYSLAQQYFDLYDENGFRTRIPIQSACNNIISSVKKTNSKHKKFVYWPKDTNALVPLVWRESKEIKLPYKTLSHNLSKIIKVYVYQHDKIEIKFEHVYFSKSDIDLFDSTMANKISKLLTLLENGDASETLQNSQVGSDEILARIRLEYEFDDDAPDDAQLNVMCNIIADMEALTDAQNISPFVPLTTLIDKMAPRKFEREQKIVYGDDAFDNASVKKWALKLDGMRGRGLFMRNFCIIQTDDMQFYKTKMANLFALNNIVAFQCEVMDKQKIYITDLLQVFKYKYNNRTQYECGVNASYAIDPVTAIECINYMNNNVQSVTLTDTCPAIELRFQQFFDPPLQQSNYMTVSVDGYVVLDTELRYVKYKWMPTTELEYDAVNKSFNTLNGPLNGLMILTDLPELLHENIYECVITDTTINVLKHRRDRIVPN</sequence>
<gene>
    <name type="primary">LEF-4</name>
    <name type="ORF">ORF90</name>
</gene>
<organismHost>
    <name type="scientific">Lepidoptera</name>
    <name type="common">butterflies and moths</name>
    <dbReference type="NCBI Taxonomy" id="7088"/>
</organismHost>
<accession>P41477</accession>
<reference key="1">
    <citation type="journal article" date="1993" name="Virology">
        <title>Identification of genes encoding late expression factors located between 56.0 and 65.4 map units of the Autographa californica nuclear polyhedrosis virus genome.</title>
        <authorList>
            <person name="Passarelli A.L."/>
            <person name="Miller L.K."/>
        </authorList>
    </citation>
    <scope>NUCLEOTIDE SEQUENCE [GENOMIC DNA]</scope>
    <scope>FUNCTION</scope>
    <source>
        <strain>L1</strain>
    </source>
</reference>
<reference key="2">
    <citation type="journal article" date="1994" name="Virology">
        <title>The complete DNA sequence of Autographa californica nuclear polyhedrosis virus.</title>
        <authorList>
            <person name="Ayres M.D."/>
            <person name="Howard S.C."/>
            <person name="Kuzio J."/>
            <person name="Lopez-Ferber M."/>
            <person name="Possee R.D."/>
        </authorList>
    </citation>
    <scope>NUCLEOTIDE SEQUENCE [LARGE SCALE GENOMIC DNA]</scope>
    <source>
        <strain>C6</strain>
    </source>
</reference>
<reference key="3">
    <citation type="journal article" date="1998" name="Virology">
        <title>Temporal expression of the AcMNPV lef-4 gene and subcellular localization of the protein.</title>
        <authorList>
            <person name="Durantel D."/>
            <person name="Croizier G."/>
            <person name="Ravallec M."/>
            <person name="Lopez-Ferber M."/>
        </authorList>
    </citation>
    <scope>SUBCELLULAR LOCATION</scope>
</reference>
<reference key="4">
    <citation type="journal article" date="1998" name="J. Virol.">
        <title>A virus-encoded RNA polymerase purified from baculovirus-infected cells.</title>
        <authorList>
            <person name="Guarino L.A."/>
            <person name="Xu B."/>
            <person name="Jin J."/>
            <person name="Dong W."/>
        </authorList>
    </citation>
    <scope>INTERACTION WITH LEF-8; LEF-9 AND P47</scope>
    <scope>FUNCTION</scope>
</reference>
<reference key="5">
    <citation type="journal article" date="1998" name="J. Virol.">
        <title>RNA 5'-triphosphatase, nucleoside triphosphatase, and guanylyltransferase activities of baculovirus LEF-4 protein.</title>
        <authorList>
            <person name="Gross C.H."/>
            <person name="Shuman S."/>
        </authorList>
    </citation>
    <scope>FUNCTION</scope>
</reference>
<reference key="6">
    <citation type="journal article" date="1998" name="J. Virol.">
        <title>Guanylyltransferase activity of the LEF-4 subunit of baculovirus RNA polymerase.</title>
        <authorList>
            <person name="Guarino L.A."/>
            <person name="Jin J."/>
            <person name="Dong W."/>
        </authorList>
    </citation>
    <scope>FUNCTION</scope>
</reference>
<protein>
    <recommendedName>
        <fullName>mRNA capping enzyme LEF-4</fullName>
        <ecNumber evidence="5">2.7.7.50</ecNumber>
        <ecNumber evidence="5">3.6.1.74</ecNumber>
    </recommendedName>
    <alternativeName>
        <fullName>Late expression factor 4</fullName>
        <shortName>LEF-4</shortName>
    </alternativeName>
</protein>
<feature type="chain" id="PRO_0000132824" description="mRNA capping enzyme LEF-4">
    <location>
        <begin position="1"/>
        <end position="464"/>
    </location>
</feature>
<feature type="region of interest" description="mRNA triphosphatase" evidence="6">
    <location>
        <begin position="1"/>
        <end position="204"/>
    </location>
</feature>
<feature type="region of interest" description="mRNA guanylyltransferase" evidence="6">
    <location>
        <begin position="205"/>
        <end position="464"/>
    </location>
</feature>
<feature type="active site" description="N6-GMP-lysine intermediate" evidence="6">
    <location>
        <position position="255"/>
    </location>
</feature>
<proteinExistence type="evidence at protein level"/>
<dbReference type="EC" id="2.7.7.50" evidence="5"/>
<dbReference type="EC" id="3.6.1.74" evidence="5"/>
<dbReference type="EMBL" id="L22858">
    <property type="protein sequence ID" value="AAA66720.1"/>
    <property type="molecule type" value="Genomic_DNA"/>
</dbReference>
<dbReference type="EMBL" id="L20217">
    <property type="protein sequence ID" value="AAA46713.1"/>
    <property type="molecule type" value="Genomic_DNA"/>
</dbReference>
<dbReference type="PIR" id="C72861">
    <property type="entry name" value="C72861"/>
</dbReference>
<dbReference type="KEGG" id="vg:1403923"/>
<dbReference type="OrthoDB" id="6452at10239"/>
<dbReference type="Proteomes" id="UP000008292">
    <property type="component" value="Segment"/>
</dbReference>
<dbReference type="GO" id="GO:0030430">
    <property type="term" value="C:host cell cytoplasm"/>
    <property type="evidence" value="ECO:0007669"/>
    <property type="project" value="UniProtKB-SubCell"/>
</dbReference>
<dbReference type="GO" id="GO:0042025">
    <property type="term" value="C:host cell nucleus"/>
    <property type="evidence" value="ECO:0007669"/>
    <property type="project" value="UniProtKB-SubCell"/>
</dbReference>
<dbReference type="GO" id="GO:0140818">
    <property type="term" value="F:mRNA 5'-triphosphate monophosphatase activity"/>
    <property type="evidence" value="ECO:0007669"/>
    <property type="project" value="RHEA"/>
</dbReference>
<dbReference type="GO" id="GO:0004484">
    <property type="term" value="F:mRNA guanylyltransferase activity"/>
    <property type="evidence" value="ECO:0007669"/>
    <property type="project" value="UniProtKB-EC"/>
</dbReference>
<dbReference type="GO" id="GO:0039695">
    <property type="term" value="P:DNA-templated viral transcription"/>
    <property type="evidence" value="ECO:0000314"/>
    <property type="project" value="UniProtKB"/>
</dbReference>
<dbReference type="GO" id="GO:0006355">
    <property type="term" value="P:regulation of DNA-templated transcription"/>
    <property type="evidence" value="ECO:0007669"/>
    <property type="project" value="InterPro"/>
</dbReference>
<dbReference type="InterPro" id="IPR007790">
    <property type="entry name" value="LEF-4"/>
</dbReference>
<dbReference type="Pfam" id="PF05098">
    <property type="entry name" value="LEF-4"/>
    <property type="match status" value="1"/>
</dbReference>
<name>LEF4_NPVAC</name>
<evidence type="ECO:0000269" key="1">
    <source>
    </source>
</evidence>
<evidence type="ECO:0000269" key="2">
    <source>
    </source>
</evidence>
<evidence type="ECO:0000269" key="3">
    <source>
    </source>
</evidence>
<evidence type="ECO:0000269" key="4">
    <source>
    </source>
</evidence>
<evidence type="ECO:0000269" key="5">
    <source>
    </source>
</evidence>
<evidence type="ECO:0000305" key="6"/>